<organism>
    <name type="scientific">Rippkaea orientalis (strain PCC 8801 / RF-1)</name>
    <name type="common">Cyanothece sp. (strain PCC 8801)</name>
    <dbReference type="NCBI Taxonomy" id="41431"/>
    <lineage>
        <taxon>Bacteria</taxon>
        <taxon>Bacillati</taxon>
        <taxon>Cyanobacteriota</taxon>
        <taxon>Cyanophyceae</taxon>
        <taxon>Oscillatoriophycideae</taxon>
        <taxon>Chroococcales</taxon>
        <taxon>Aphanothecaceae</taxon>
        <taxon>Rippkaea</taxon>
        <taxon>Rippkaea orientalis</taxon>
    </lineage>
</organism>
<evidence type="ECO:0000255" key="1">
    <source>
        <dbReference type="HAMAP-Rule" id="MF_00437"/>
    </source>
</evidence>
<comment type="function">
    <text evidence="1">Seems to be required for the assembly of the photosystem I complex.</text>
</comment>
<comment type="subcellular location">
    <subcellularLocation>
        <location evidence="1">Cellular thylakoid membrane</location>
        <topology evidence="1">Multi-pass membrane protein</topology>
    </subcellularLocation>
</comment>
<comment type="similarity">
    <text evidence="1">Belongs to the Ycf4 family.</text>
</comment>
<protein>
    <recommendedName>
        <fullName evidence="1">Photosystem I assembly protein Ycf4</fullName>
    </recommendedName>
</protein>
<proteinExistence type="inferred from homology"/>
<feature type="chain" id="PRO_1000200328" description="Photosystem I assembly protein Ycf4">
    <location>
        <begin position="1"/>
        <end position="188"/>
    </location>
</feature>
<feature type="transmembrane region" description="Helical" evidence="1">
    <location>
        <begin position="26"/>
        <end position="46"/>
    </location>
</feature>
<feature type="transmembrane region" description="Helical" evidence="1">
    <location>
        <begin position="70"/>
        <end position="90"/>
    </location>
</feature>
<accession>B7JVR2</accession>
<sequence>MNAPAMTSDRLVLREEVLGSRRFSNIWWGTVAAIGGIGFLLAGLSSYLRVNLLIVSDTSQLVFIPQGIALLFYGIAGSALSLYLWFTIILDIGGGYNEFNKETGKVTIFRWGFPGKNRRIEVSYPLADIQAIRADIKEGLNTKRKLYIQLKQRREIPLTRVGRPISLSELENQGAELARFLGVPLEGL</sequence>
<gene>
    <name evidence="1" type="primary">ycf4</name>
    <name type="ordered locus">PCC8801_0542</name>
</gene>
<dbReference type="EMBL" id="CP001287">
    <property type="protein sequence ID" value="ACK64633.1"/>
    <property type="molecule type" value="Genomic_DNA"/>
</dbReference>
<dbReference type="RefSeq" id="WP_012593910.1">
    <property type="nucleotide sequence ID" value="NC_011726.1"/>
</dbReference>
<dbReference type="STRING" id="41431.PCC8801_0542"/>
<dbReference type="KEGG" id="cyp:PCC8801_0542"/>
<dbReference type="eggNOG" id="ENOG502Z7YX">
    <property type="taxonomic scope" value="Bacteria"/>
</dbReference>
<dbReference type="HOGENOM" id="CLU_095465_0_0_3"/>
<dbReference type="OrthoDB" id="7059574at2"/>
<dbReference type="Proteomes" id="UP000008204">
    <property type="component" value="Chromosome"/>
</dbReference>
<dbReference type="GO" id="GO:0009522">
    <property type="term" value="C:photosystem I"/>
    <property type="evidence" value="ECO:0007669"/>
    <property type="project" value="InterPro"/>
</dbReference>
<dbReference type="GO" id="GO:0031676">
    <property type="term" value="C:plasma membrane-derived thylakoid membrane"/>
    <property type="evidence" value="ECO:0007669"/>
    <property type="project" value="UniProtKB-SubCell"/>
</dbReference>
<dbReference type="GO" id="GO:0015979">
    <property type="term" value="P:photosynthesis"/>
    <property type="evidence" value="ECO:0007669"/>
    <property type="project" value="UniProtKB-UniRule"/>
</dbReference>
<dbReference type="HAMAP" id="MF_00437">
    <property type="entry name" value="Ycf4"/>
    <property type="match status" value="1"/>
</dbReference>
<dbReference type="InterPro" id="IPR003359">
    <property type="entry name" value="PSI_Ycf4_assembly"/>
</dbReference>
<dbReference type="NCBIfam" id="NF002712">
    <property type="entry name" value="PRK02542.1"/>
    <property type="match status" value="1"/>
</dbReference>
<dbReference type="PANTHER" id="PTHR33288">
    <property type="match status" value="1"/>
</dbReference>
<dbReference type="PANTHER" id="PTHR33288:SF4">
    <property type="entry name" value="PHOTOSYSTEM I ASSEMBLY PROTEIN YCF4"/>
    <property type="match status" value="1"/>
</dbReference>
<dbReference type="Pfam" id="PF02392">
    <property type="entry name" value="Ycf4"/>
    <property type="match status" value="1"/>
</dbReference>
<keyword id="KW-0472">Membrane</keyword>
<keyword id="KW-0602">Photosynthesis</keyword>
<keyword id="KW-1185">Reference proteome</keyword>
<keyword id="KW-0793">Thylakoid</keyword>
<keyword id="KW-0812">Transmembrane</keyword>
<keyword id="KW-1133">Transmembrane helix</keyword>
<name>YCF4_RIPO1</name>
<reference key="1">
    <citation type="journal article" date="2011" name="MBio">
        <title>Novel metabolic attributes of the genus Cyanothece, comprising a group of unicellular nitrogen-fixing Cyanobacteria.</title>
        <authorList>
            <person name="Bandyopadhyay A."/>
            <person name="Elvitigala T."/>
            <person name="Welsh E."/>
            <person name="Stockel J."/>
            <person name="Liberton M."/>
            <person name="Min H."/>
            <person name="Sherman L.A."/>
            <person name="Pakrasi H.B."/>
        </authorList>
    </citation>
    <scope>NUCLEOTIDE SEQUENCE [LARGE SCALE GENOMIC DNA]</scope>
    <source>
        <strain>PCC 8801 / RF-1</strain>
    </source>
</reference>